<feature type="chain" id="PRO_1000087158" description="Large ribosomal subunit protein bL17">
    <location>
        <begin position="1"/>
        <end position="120"/>
    </location>
</feature>
<dbReference type="EMBL" id="CP000764">
    <property type="protein sequence ID" value="ABS20506.1"/>
    <property type="molecule type" value="Genomic_DNA"/>
</dbReference>
<dbReference type="RefSeq" id="WP_000331490.1">
    <property type="nucleotide sequence ID" value="NC_009674.1"/>
</dbReference>
<dbReference type="SMR" id="A7GK48"/>
<dbReference type="STRING" id="315749.Bcer98_0132"/>
<dbReference type="GeneID" id="93010915"/>
<dbReference type="KEGG" id="bcy:Bcer98_0132"/>
<dbReference type="eggNOG" id="COG0203">
    <property type="taxonomic scope" value="Bacteria"/>
</dbReference>
<dbReference type="HOGENOM" id="CLU_074407_2_2_9"/>
<dbReference type="OrthoDB" id="9809073at2"/>
<dbReference type="Proteomes" id="UP000002300">
    <property type="component" value="Chromosome"/>
</dbReference>
<dbReference type="GO" id="GO:0022625">
    <property type="term" value="C:cytosolic large ribosomal subunit"/>
    <property type="evidence" value="ECO:0007669"/>
    <property type="project" value="TreeGrafter"/>
</dbReference>
<dbReference type="GO" id="GO:0003735">
    <property type="term" value="F:structural constituent of ribosome"/>
    <property type="evidence" value="ECO:0007669"/>
    <property type="project" value="InterPro"/>
</dbReference>
<dbReference type="GO" id="GO:0006412">
    <property type="term" value="P:translation"/>
    <property type="evidence" value="ECO:0007669"/>
    <property type="project" value="UniProtKB-UniRule"/>
</dbReference>
<dbReference type="FunFam" id="3.90.1030.10:FF:000002">
    <property type="entry name" value="50S ribosomal protein L17"/>
    <property type="match status" value="1"/>
</dbReference>
<dbReference type="Gene3D" id="3.90.1030.10">
    <property type="entry name" value="Ribosomal protein L17"/>
    <property type="match status" value="1"/>
</dbReference>
<dbReference type="HAMAP" id="MF_01368">
    <property type="entry name" value="Ribosomal_bL17"/>
    <property type="match status" value="1"/>
</dbReference>
<dbReference type="InterPro" id="IPR000456">
    <property type="entry name" value="Ribosomal_bL17"/>
</dbReference>
<dbReference type="InterPro" id="IPR047859">
    <property type="entry name" value="Ribosomal_bL17_CS"/>
</dbReference>
<dbReference type="InterPro" id="IPR036373">
    <property type="entry name" value="Ribosomal_bL17_sf"/>
</dbReference>
<dbReference type="NCBIfam" id="TIGR00059">
    <property type="entry name" value="L17"/>
    <property type="match status" value="1"/>
</dbReference>
<dbReference type="PANTHER" id="PTHR14413:SF16">
    <property type="entry name" value="LARGE RIBOSOMAL SUBUNIT PROTEIN BL17M"/>
    <property type="match status" value="1"/>
</dbReference>
<dbReference type="PANTHER" id="PTHR14413">
    <property type="entry name" value="RIBOSOMAL PROTEIN L17"/>
    <property type="match status" value="1"/>
</dbReference>
<dbReference type="Pfam" id="PF01196">
    <property type="entry name" value="Ribosomal_L17"/>
    <property type="match status" value="1"/>
</dbReference>
<dbReference type="SUPFAM" id="SSF64263">
    <property type="entry name" value="Prokaryotic ribosomal protein L17"/>
    <property type="match status" value="1"/>
</dbReference>
<dbReference type="PROSITE" id="PS01167">
    <property type="entry name" value="RIBOSOMAL_L17"/>
    <property type="match status" value="1"/>
</dbReference>
<proteinExistence type="inferred from homology"/>
<name>RL17_BACCN</name>
<reference key="1">
    <citation type="journal article" date="2008" name="Chem. Biol. Interact.">
        <title>Extending the Bacillus cereus group genomics to putative food-borne pathogens of different toxicity.</title>
        <authorList>
            <person name="Lapidus A."/>
            <person name="Goltsman E."/>
            <person name="Auger S."/>
            <person name="Galleron N."/>
            <person name="Segurens B."/>
            <person name="Dossat C."/>
            <person name="Land M.L."/>
            <person name="Broussolle V."/>
            <person name="Brillard J."/>
            <person name="Guinebretiere M.-H."/>
            <person name="Sanchis V."/>
            <person name="Nguen-the C."/>
            <person name="Lereclus D."/>
            <person name="Richardson P."/>
            <person name="Wincker P."/>
            <person name="Weissenbach J."/>
            <person name="Ehrlich S.D."/>
            <person name="Sorokin A."/>
        </authorList>
    </citation>
    <scope>NUCLEOTIDE SEQUENCE [LARGE SCALE GENOMIC DNA]</scope>
    <source>
        <strain>DSM 22905 / CIP 110041 / 391-98 / NVH 391-98</strain>
    </source>
</reference>
<evidence type="ECO:0000255" key="1">
    <source>
        <dbReference type="HAMAP-Rule" id="MF_01368"/>
    </source>
</evidence>
<evidence type="ECO:0000305" key="2"/>
<keyword id="KW-0687">Ribonucleoprotein</keyword>
<keyword id="KW-0689">Ribosomal protein</keyword>
<organism>
    <name type="scientific">Bacillus cytotoxicus (strain DSM 22905 / CIP 110041 / 391-98 / NVH 391-98)</name>
    <dbReference type="NCBI Taxonomy" id="315749"/>
    <lineage>
        <taxon>Bacteria</taxon>
        <taxon>Bacillati</taxon>
        <taxon>Bacillota</taxon>
        <taxon>Bacilli</taxon>
        <taxon>Bacillales</taxon>
        <taxon>Bacillaceae</taxon>
        <taxon>Bacillus</taxon>
        <taxon>Bacillus cereus group</taxon>
    </lineage>
</organism>
<comment type="subunit">
    <text evidence="1">Part of the 50S ribosomal subunit. Contacts protein L32.</text>
</comment>
<comment type="similarity">
    <text evidence="1">Belongs to the bacterial ribosomal protein bL17 family.</text>
</comment>
<accession>A7GK48</accession>
<protein>
    <recommendedName>
        <fullName evidence="1">Large ribosomal subunit protein bL17</fullName>
    </recommendedName>
    <alternativeName>
        <fullName evidence="2">50S ribosomal protein L17</fullName>
    </alternativeName>
</protein>
<gene>
    <name evidence="1" type="primary">rplQ</name>
    <name type="ordered locus">Bcer98_0132</name>
</gene>
<sequence>MAYRKLGRTSAQRKAMLRDLATDLIINERIQTTETRAKELRSVVEKMITLGKRGDLHARRQAAAFIRNEVANAETGQDALQKLFADVAPRYAERQGGYTRIAKIGPRRGDAAPMVIIELV</sequence>